<protein>
    <recommendedName>
        <fullName evidence="1">tRNA N6-adenosine threonylcarbamoyltransferase</fullName>
        <ecNumber evidence="1">2.3.1.234</ecNumber>
    </recommendedName>
    <alternativeName>
        <fullName evidence="1">N6-L-threonylcarbamoyladenine synthase</fullName>
        <shortName evidence="1">t(6)A synthase</shortName>
    </alternativeName>
    <alternativeName>
        <fullName evidence="1">t(6)A37 threonylcarbamoyladenosine biosynthesis protein TsaD</fullName>
    </alternativeName>
    <alternativeName>
        <fullName evidence="1">tRNA threonylcarbamoyladenosine biosynthesis protein TsaD</fullName>
    </alternativeName>
</protein>
<keyword id="KW-0012">Acyltransferase</keyword>
<keyword id="KW-0963">Cytoplasm</keyword>
<keyword id="KW-0408">Iron</keyword>
<keyword id="KW-0479">Metal-binding</keyword>
<keyword id="KW-0808">Transferase</keyword>
<keyword id="KW-0819">tRNA processing</keyword>
<comment type="function">
    <text evidence="1">Required for the formation of a threonylcarbamoyl group on adenosine at position 37 (t(6)A37) in tRNAs that read codons beginning with adenine. Is involved in the transfer of the threonylcarbamoyl moiety of threonylcarbamoyl-AMP (TC-AMP) to the N6 group of A37, together with TsaE and TsaB. TsaD likely plays a direct catalytic role in this reaction.</text>
</comment>
<comment type="catalytic activity">
    <reaction evidence="1">
        <text>L-threonylcarbamoyladenylate + adenosine(37) in tRNA = N(6)-L-threonylcarbamoyladenosine(37) in tRNA + AMP + H(+)</text>
        <dbReference type="Rhea" id="RHEA:37059"/>
        <dbReference type="Rhea" id="RHEA-COMP:10162"/>
        <dbReference type="Rhea" id="RHEA-COMP:10163"/>
        <dbReference type="ChEBI" id="CHEBI:15378"/>
        <dbReference type="ChEBI" id="CHEBI:73682"/>
        <dbReference type="ChEBI" id="CHEBI:74411"/>
        <dbReference type="ChEBI" id="CHEBI:74418"/>
        <dbReference type="ChEBI" id="CHEBI:456215"/>
        <dbReference type="EC" id="2.3.1.234"/>
    </reaction>
</comment>
<comment type="cofactor">
    <cofactor evidence="1">
        <name>Fe(2+)</name>
        <dbReference type="ChEBI" id="CHEBI:29033"/>
    </cofactor>
    <text evidence="1">Binds 1 Fe(2+) ion per subunit.</text>
</comment>
<comment type="subcellular location">
    <subcellularLocation>
        <location evidence="1">Cytoplasm</location>
    </subcellularLocation>
</comment>
<comment type="similarity">
    <text evidence="1">Belongs to the KAE1 / TsaD family.</text>
</comment>
<evidence type="ECO:0000255" key="1">
    <source>
        <dbReference type="HAMAP-Rule" id="MF_01445"/>
    </source>
</evidence>
<feature type="chain" id="PRO_1000087474" description="tRNA N6-adenosine threonylcarbamoyltransferase">
    <location>
        <begin position="1"/>
        <end position="337"/>
    </location>
</feature>
<feature type="binding site" evidence="1">
    <location>
        <position position="111"/>
    </location>
    <ligand>
        <name>Fe cation</name>
        <dbReference type="ChEBI" id="CHEBI:24875"/>
    </ligand>
</feature>
<feature type="binding site" evidence="1">
    <location>
        <position position="115"/>
    </location>
    <ligand>
        <name>Fe cation</name>
        <dbReference type="ChEBI" id="CHEBI:24875"/>
    </ligand>
</feature>
<feature type="binding site" evidence="1">
    <location>
        <begin position="134"/>
        <end position="138"/>
    </location>
    <ligand>
        <name>substrate</name>
    </ligand>
</feature>
<feature type="binding site" evidence="1">
    <location>
        <position position="167"/>
    </location>
    <ligand>
        <name>substrate</name>
    </ligand>
</feature>
<feature type="binding site" evidence="1">
    <location>
        <position position="180"/>
    </location>
    <ligand>
        <name>substrate</name>
    </ligand>
</feature>
<feature type="binding site" evidence="1">
    <location>
        <position position="272"/>
    </location>
    <ligand>
        <name>substrate</name>
    </ligand>
</feature>
<feature type="binding site" evidence="1">
    <location>
        <position position="300"/>
    </location>
    <ligand>
        <name>Fe cation</name>
        <dbReference type="ChEBI" id="CHEBI:24875"/>
    </ligand>
</feature>
<proteinExistence type="inferred from homology"/>
<organism>
    <name type="scientific">Escherichia coli (strain ATCC 8739 / DSM 1576 / NBRC 3972 / NCIMB 8545 / WDCM 00012 / Crooks)</name>
    <dbReference type="NCBI Taxonomy" id="481805"/>
    <lineage>
        <taxon>Bacteria</taxon>
        <taxon>Pseudomonadati</taxon>
        <taxon>Pseudomonadota</taxon>
        <taxon>Gammaproteobacteria</taxon>
        <taxon>Enterobacterales</taxon>
        <taxon>Enterobacteriaceae</taxon>
        <taxon>Escherichia</taxon>
    </lineage>
</organism>
<reference key="1">
    <citation type="submission" date="2008-02" db="EMBL/GenBank/DDBJ databases">
        <title>Complete sequence of Escherichia coli C str. ATCC 8739.</title>
        <authorList>
            <person name="Copeland A."/>
            <person name="Lucas S."/>
            <person name="Lapidus A."/>
            <person name="Glavina del Rio T."/>
            <person name="Dalin E."/>
            <person name="Tice H."/>
            <person name="Bruce D."/>
            <person name="Goodwin L."/>
            <person name="Pitluck S."/>
            <person name="Kiss H."/>
            <person name="Brettin T."/>
            <person name="Detter J.C."/>
            <person name="Han C."/>
            <person name="Kuske C.R."/>
            <person name="Schmutz J."/>
            <person name="Larimer F."/>
            <person name="Land M."/>
            <person name="Hauser L."/>
            <person name="Kyrpides N."/>
            <person name="Mikhailova N."/>
            <person name="Ingram L."/>
            <person name="Richardson P."/>
        </authorList>
    </citation>
    <scope>NUCLEOTIDE SEQUENCE [LARGE SCALE GENOMIC DNA]</scope>
    <source>
        <strain>ATCC 8739 / DSM 1576 / NBRC 3972 / NCIMB 8545 / WDCM 00012 / Crooks</strain>
    </source>
</reference>
<name>TSAD_ECOLC</name>
<gene>
    <name evidence="1" type="primary">tsaD</name>
    <name type="synonym">gcp</name>
    <name type="ordered locus">EcolC_0635</name>
</gene>
<dbReference type="EC" id="2.3.1.234" evidence="1"/>
<dbReference type="EMBL" id="CP000946">
    <property type="protein sequence ID" value="ACA76311.1"/>
    <property type="molecule type" value="Genomic_DNA"/>
</dbReference>
<dbReference type="RefSeq" id="WP_001264365.1">
    <property type="nucleotide sequence ID" value="NZ_MTFT01000027.1"/>
</dbReference>
<dbReference type="SMR" id="B1IRQ2"/>
<dbReference type="GeneID" id="93778929"/>
<dbReference type="KEGG" id="ecl:EcolC_0635"/>
<dbReference type="HOGENOM" id="CLU_023208_0_2_6"/>
<dbReference type="GO" id="GO:0005737">
    <property type="term" value="C:cytoplasm"/>
    <property type="evidence" value="ECO:0007669"/>
    <property type="project" value="UniProtKB-SubCell"/>
</dbReference>
<dbReference type="GO" id="GO:0005506">
    <property type="term" value="F:iron ion binding"/>
    <property type="evidence" value="ECO:0007669"/>
    <property type="project" value="UniProtKB-UniRule"/>
</dbReference>
<dbReference type="GO" id="GO:0061711">
    <property type="term" value="F:N(6)-L-threonylcarbamoyladenine synthase activity"/>
    <property type="evidence" value="ECO:0007669"/>
    <property type="project" value="UniProtKB-EC"/>
</dbReference>
<dbReference type="GO" id="GO:0002949">
    <property type="term" value="P:tRNA threonylcarbamoyladenosine modification"/>
    <property type="evidence" value="ECO:0007669"/>
    <property type="project" value="UniProtKB-UniRule"/>
</dbReference>
<dbReference type="CDD" id="cd24097">
    <property type="entry name" value="ASKHA_NBD_TsaD-like"/>
    <property type="match status" value="1"/>
</dbReference>
<dbReference type="FunFam" id="3.30.420.40:FF:000031">
    <property type="entry name" value="tRNA N6-adenosine threonylcarbamoyltransferase"/>
    <property type="match status" value="1"/>
</dbReference>
<dbReference type="Gene3D" id="3.30.420.40">
    <property type="match status" value="2"/>
</dbReference>
<dbReference type="HAMAP" id="MF_01445">
    <property type="entry name" value="TsaD"/>
    <property type="match status" value="1"/>
</dbReference>
<dbReference type="InterPro" id="IPR043129">
    <property type="entry name" value="ATPase_NBD"/>
</dbReference>
<dbReference type="InterPro" id="IPR000905">
    <property type="entry name" value="Gcp-like_dom"/>
</dbReference>
<dbReference type="InterPro" id="IPR017861">
    <property type="entry name" value="KAE1/TsaD"/>
</dbReference>
<dbReference type="InterPro" id="IPR017860">
    <property type="entry name" value="Peptidase_M22_CS"/>
</dbReference>
<dbReference type="InterPro" id="IPR022450">
    <property type="entry name" value="TsaD"/>
</dbReference>
<dbReference type="NCBIfam" id="TIGR00329">
    <property type="entry name" value="gcp_kae1"/>
    <property type="match status" value="1"/>
</dbReference>
<dbReference type="NCBIfam" id="TIGR03723">
    <property type="entry name" value="T6A_TsaD_YgjD"/>
    <property type="match status" value="1"/>
</dbReference>
<dbReference type="PANTHER" id="PTHR11735">
    <property type="entry name" value="TRNA N6-ADENOSINE THREONYLCARBAMOYLTRANSFERASE"/>
    <property type="match status" value="1"/>
</dbReference>
<dbReference type="PANTHER" id="PTHR11735:SF6">
    <property type="entry name" value="TRNA N6-ADENOSINE THREONYLCARBAMOYLTRANSFERASE, MITOCHONDRIAL"/>
    <property type="match status" value="1"/>
</dbReference>
<dbReference type="Pfam" id="PF00814">
    <property type="entry name" value="TsaD"/>
    <property type="match status" value="1"/>
</dbReference>
<dbReference type="PRINTS" id="PR00789">
    <property type="entry name" value="OSIALOPTASE"/>
</dbReference>
<dbReference type="SUPFAM" id="SSF53067">
    <property type="entry name" value="Actin-like ATPase domain"/>
    <property type="match status" value="1"/>
</dbReference>
<dbReference type="PROSITE" id="PS01016">
    <property type="entry name" value="GLYCOPROTEASE"/>
    <property type="match status" value="1"/>
</dbReference>
<sequence>MRVLGIETSCDETGIAIYDDEKGLLANQLYSQVKLHADYGGVVPELASRDHVRKTVPLIQAALKESGLTAKDIDAVAYTAGPGLVGALLVGATVGRSLAFAWNVPAIPVHHMEGHLLAPMLEDNPPEFPFVALLVSGGHTQLISVTGIGQYELLGESIDDAAGEAFDKTAKLLGLDYPGGPLLSKMAAQGTAGRFVFPRPMTDRPGLDFSFSGLKTFAANTIRDNGTDDQTRADIARAFEDAVVDTLMIKCKRALDQTGFKRLVMAGGVSANRTLRAKLAEMMKKRRGEVFYARPEFCTDNGAMIAYAGMVRFKAGATADLGVSVRPRWPLAELPAA</sequence>
<accession>B1IRQ2</accession>